<feature type="chain" id="PRO_1000213731" description="Bifunctional polymyxin resistance protein ArnA">
    <location>
        <begin position="1"/>
        <end position="663"/>
    </location>
</feature>
<feature type="region of interest" description="Formyltransferase ArnAFT">
    <location>
        <begin position="1"/>
        <end position="307"/>
    </location>
</feature>
<feature type="region of interest" description="Dehydrogenase ArnADH">
    <location>
        <begin position="317"/>
        <end position="663"/>
    </location>
</feature>
<feature type="active site" description="Proton donor; for formyltransferase activity" evidence="1">
    <location>
        <position position="106"/>
    </location>
</feature>
<feature type="active site" description="Proton acceptor; for decarboxylase activity" evidence="1">
    <location>
        <position position="437"/>
    </location>
</feature>
<feature type="active site" description="Proton donor; for decarboxylase activity" evidence="1">
    <location>
        <position position="621"/>
    </location>
</feature>
<feature type="binding site" evidence="1">
    <location>
        <position position="116"/>
    </location>
    <ligand>
        <name>(6R)-10-formyltetrahydrofolate</name>
        <dbReference type="ChEBI" id="CHEBI:195366"/>
    </ligand>
</feature>
<feature type="binding site" evidence="1">
    <location>
        <begin position="138"/>
        <end position="142"/>
    </location>
    <ligand>
        <name>(6R)-10-formyltetrahydrofolate</name>
        <dbReference type="ChEBI" id="CHEBI:195366"/>
    </ligand>
</feature>
<feature type="binding site" evidence="1">
    <location>
        <position position="350"/>
    </location>
    <ligand>
        <name>NAD(+)</name>
        <dbReference type="ChEBI" id="CHEBI:57540"/>
    </ligand>
</feature>
<feature type="binding site" evidence="1">
    <location>
        <begin position="371"/>
        <end position="372"/>
    </location>
    <ligand>
        <name>NAD(+)</name>
        <dbReference type="ChEBI" id="CHEBI:57540"/>
    </ligand>
</feature>
<feature type="binding site" evidence="1">
    <location>
        <position position="396"/>
    </location>
    <ligand>
        <name>UDP-alpha-D-glucuronate</name>
        <dbReference type="ChEBI" id="CHEBI:58052"/>
    </ligand>
</feature>
<feature type="binding site" evidence="1">
    <location>
        <position position="401"/>
    </location>
    <ligand>
        <name>UDP-alpha-D-glucuronate</name>
        <dbReference type="ChEBI" id="CHEBI:58052"/>
    </ligand>
</feature>
<feature type="binding site" evidence="1">
    <location>
        <begin position="435"/>
        <end position="436"/>
    </location>
    <ligand>
        <name>UDP-alpha-D-glucuronate</name>
        <dbReference type="ChEBI" id="CHEBI:58052"/>
    </ligand>
</feature>
<feature type="binding site" evidence="1">
    <location>
        <position position="463"/>
    </location>
    <ligand>
        <name>UDP-alpha-D-glucuronate</name>
        <dbReference type="ChEBI" id="CHEBI:58052"/>
    </ligand>
</feature>
<feature type="binding site" evidence="1">
    <location>
        <position position="494"/>
    </location>
    <ligand>
        <name>UDP-alpha-D-glucuronate</name>
        <dbReference type="ChEBI" id="CHEBI:58052"/>
    </ligand>
</feature>
<feature type="binding site" evidence="1">
    <location>
        <begin position="528"/>
        <end position="537"/>
    </location>
    <ligand>
        <name>UDP-alpha-D-glucuronate</name>
        <dbReference type="ChEBI" id="CHEBI:58052"/>
    </ligand>
</feature>
<feature type="binding site" evidence="1">
    <location>
        <position position="615"/>
    </location>
    <ligand>
        <name>UDP-alpha-D-glucuronate</name>
        <dbReference type="ChEBI" id="CHEBI:58052"/>
    </ligand>
</feature>
<feature type="site" description="Transition state stabilizer" evidence="1">
    <location>
        <position position="104"/>
    </location>
</feature>
<feature type="site" description="Raises pKa of active site His" evidence="1">
    <location>
        <position position="142"/>
    </location>
</feature>
<accession>C3KAD2</accession>
<name>ARNA_PSEFS</name>
<comment type="function">
    <text evidence="1">Bifunctional enzyme that catalyzes the oxidative decarboxylation of UDP-glucuronic acid (UDP-GlcUA) to UDP-4-keto-arabinose (UDP-Ara4O) and the addition of a formyl group to UDP-4-amino-4-deoxy-L-arabinose (UDP-L-Ara4N) to form UDP-L-4-formamido-arabinose (UDP-L-Ara4FN). The modified arabinose is attached to lipid A and is required for resistance to polymyxin and cationic antimicrobial peptides.</text>
</comment>
<comment type="catalytic activity">
    <reaction evidence="1">
        <text>UDP-alpha-D-glucuronate + NAD(+) = UDP-beta-L-threo-pentopyranos-4-ulose + CO2 + NADH</text>
        <dbReference type="Rhea" id="RHEA:24702"/>
        <dbReference type="ChEBI" id="CHEBI:16526"/>
        <dbReference type="ChEBI" id="CHEBI:57540"/>
        <dbReference type="ChEBI" id="CHEBI:57945"/>
        <dbReference type="ChEBI" id="CHEBI:58052"/>
        <dbReference type="ChEBI" id="CHEBI:58710"/>
        <dbReference type="EC" id="1.1.1.305"/>
    </reaction>
</comment>
<comment type="catalytic activity">
    <reaction evidence="1">
        <text>UDP-4-amino-4-deoxy-beta-L-arabinose + (6R)-10-formyltetrahydrofolate = UDP-4-deoxy-4-formamido-beta-L-arabinose + (6S)-5,6,7,8-tetrahydrofolate + H(+)</text>
        <dbReference type="Rhea" id="RHEA:24706"/>
        <dbReference type="ChEBI" id="CHEBI:15378"/>
        <dbReference type="ChEBI" id="CHEBI:57453"/>
        <dbReference type="ChEBI" id="CHEBI:58708"/>
        <dbReference type="ChEBI" id="CHEBI:58709"/>
        <dbReference type="ChEBI" id="CHEBI:195366"/>
        <dbReference type="EC" id="2.1.2.13"/>
    </reaction>
</comment>
<comment type="pathway">
    <text evidence="1">Nucleotide-sugar biosynthesis; UDP-4-deoxy-4-formamido-beta-L-arabinose biosynthesis; UDP-4-deoxy-4-formamido-beta-L-arabinose from UDP-alpha-D-glucuronate: step 1/3.</text>
</comment>
<comment type="pathway">
    <text evidence="1">Nucleotide-sugar biosynthesis; UDP-4-deoxy-4-formamido-beta-L-arabinose biosynthesis; UDP-4-deoxy-4-formamido-beta-L-arabinose from UDP-alpha-D-glucuronate: step 3/3.</text>
</comment>
<comment type="pathway">
    <text evidence="1">Bacterial outer membrane biogenesis; lipopolysaccharide biosynthesis.</text>
</comment>
<comment type="subunit">
    <text evidence="1">Homohexamer, formed by a dimer of trimers.</text>
</comment>
<comment type="similarity">
    <text evidence="1">In the N-terminal section; belongs to the Fmt family. UDP-L-Ara4N formyltransferase subfamily.</text>
</comment>
<comment type="similarity">
    <text evidence="1">In the C-terminal section; belongs to the NAD(P)-dependent epimerase/dehydratase family. UDP-glucuronic acid decarboxylase subfamily.</text>
</comment>
<dbReference type="EC" id="2.1.2.13" evidence="1"/>
<dbReference type="EC" id="1.1.1.305" evidence="1"/>
<dbReference type="EMBL" id="AM181176">
    <property type="protein sequence ID" value="CAY49270.1"/>
    <property type="molecule type" value="Genomic_DNA"/>
</dbReference>
<dbReference type="RefSeq" id="WP_012724221.1">
    <property type="nucleotide sequence ID" value="NC_012660.1"/>
</dbReference>
<dbReference type="SMR" id="C3KAD2"/>
<dbReference type="eggNOG" id="COG0223">
    <property type="taxonomic scope" value="Bacteria"/>
</dbReference>
<dbReference type="eggNOG" id="COG0451">
    <property type="taxonomic scope" value="Bacteria"/>
</dbReference>
<dbReference type="HOGENOM" id="CLU_007383_23_1_6"/>
<dbReference type="OrthoDB" id="9802815at2"/>
<dbReference type="UniPathway" id="UPA00030"/>
<dbReference type="UniPathway" id="UPA00032">
    <property type="reaction ID" value="UER00492"/>
</dbReference>
<dbReference type="UniPathway" id="UPA00032">
    <property type="reaction ID" value="UER00494"/>
</dbReference>
<dbReference type="GO" id="GO:0016020">
    <property type="term" value="C:membrane"/>
    <property type="evidence" value="ECO:0007669"/>
    <property type="project" value="GOC"/>
</dbReference>
<dbReference type="GO" id="GO:0016831">
    <property type="term" value="F:carboxy-lyase activity"/>
    <property type="evidence" value="ECO:0007669"/>
    <property type="project" value="InterPro"/>
</dbReference>
<dbReference type="GO" id="GO:0099619">
    <property type="term" value="F:UDP-4-amino-4-deoxy-L-arabinose formyltransferase activity"/>
    <property type="evidence" value="ECO:0007669"/>
    <property type="project" value="UniProtKB-EC"/>
</dbReference>
<dbReference type="GO" id="GO:0099618">
    <property type="term" value="F:UDP-glucuronate dehydrogenase activity"/>
    <property type="evidence" value="ECO:0007669"/>
    <property type="project" value="UniProtKB-EC"/>
</dbReference>
<dbReference type="GO" id="GO:0009245">
    <property type="term" value="P:lipid A biosynthetic process"/>
    <property type="evidence" value="ECO:0007669"/>
    <property type="project" value="UniProtKB-KW"/>
</dbReference>
<dbReference type="GO" id="GO:0009103">
    <property type="term" value="P:lipopolysaccharide biosynthetic process"/>
    <property type="evidence" value="ECO:0007669"/>
    <property type="project" value="UniProtKB-UniRule"/>
</dbReference>
<dbReference type="GO" id="GO:0046677">
    <property type="term" value="P:response to antibiotic"/>
    <property type="evidence" value="ECO:0007669"/>
    <property type="project" value="UniProtKB-KW"/>
</dbReference>
<dbReference type="CDD" id="cd08702">
    <property type="entry name" value="Arna_FMT_C"/>
    <property type="match status" value="1"/>
</dbReference>
<dbReference type="CDD" id="cd05257">
    <property type="entry name" value="Arna_like_SDR_e"/>
    <property type="match status" value="1"/>
</dbReference>
<dbReference type="FunFam" id="3.40.50.720:FF:000197">
    <property type="entry name" value="Bifunctional polymyxin resistance protein ArnA"/>
    <property type="match status" value="1"/>
</dbReference>
<dbReference type="Gene3D" id="3.40.50.12230">
    <property type="match status" value="1"/>
</dbReference>
<dbReference type="Gene3D" id="3.40.50.720">
    <property type="entry name" value="NAD(P)-binding Rossmann-like Domain"/>
    <property type="match status" value="1"/>
</dbReference>
<dbReference type="HAMAP" id="MF_01166">
    <property type="entry name" value="ArnA"/>
    <property type="match status" value="1"/>
</dbReference>
<dbReference type="InterPro" id="IPR045869">
    <property type="entry name" value="Arna-like_SDR_e"/>
</dbReference>
<dbReference type="InterPro" id="IPR021168">
    <property type="entry name" value="Bifun_polymyxin_resist_ArnA"/>
</dbReference>
<dbReference type="InterPro" id="IPR001509">
    <property type="entry name" value="Epimerase_deHydtase"/>
</dbReference>
<dbReference type="InterPro" id="IPR005793">
    <property type="entry name" value="Formyl_trans_C"/>
</dbReference>
<dbReference type="InterPro" id="IPR002376">
    <property type="entry name" value="Formyl_transf_N"/>
</dbReference>
<dbReference type="InterPro" id="IPR036477">
    <property type="entry name" value="Formyl_transf_N_sf"/>
</dbReference>
<dbReference type="InterPro" id="IPR011034">
    <property type="entry name" value="Formyl_transferase-like_C_sf"/>
</dbReference>
<dbReference type="InterPro" id="IPR050177">
    <property type="entry name" value="Lipid_A_modif_metabolic_enz"/>
</dbReference>
<dbReference type="InterPro" id="IPR036291">
    <property type="entry name" value="NAD(P)-bd_dom_sf"/>
</dbReference>
<dbReference type="NCBIfam" id="NF005414">
    <property type="entry name" value="PRK06988.1"/>
    <property type="match status" value="1"/>
</dbReference>
<dbReference type="NCBIfam" id="NF005998">
    <property type="entry name" value="PRK08125.1"/>
    <property type="match status" value="1"/>
</dbReference>
<dbReference type="NCBIfam" id="NF008872">
    <property type="entry name" value="PRK11908.1"/>
    <property type="match status" value="1"/>
</dbReference>
<dbReference type="PANTHER" id="PTHR43245">
    <property type="entry name" value="BIFUNCTIONAL POLYMYXIN RESISTANCE PROTEIN ARNA"/>
    <property type="match status" value="1"/>
</dbReference>
<dbReference type="PANTHER" id="PTHR43245:SF13">
    <property type="entry name" value="UDP-D-APIOSE_UDP-D-XYLOSE SYNTHASE 2"/>
    <property type="match status" value="1"/>
</dbReference>
<dbReference type="Pfam" id="PF01370">
    <property type="entry name" value="Epimerase"/>
    <property type="match status" value="1"/>
</dbReference>
<dbReference type="Pfam" id="PF02911">
    <property type="entry name" value="Formyl_trans_C"/>
    <property type="match status" value="1"/>
</dbReference>
<dbReference type="Pfam" id="PF00551">
    <property type="entry name" value="Formyl_trans_N"/>
    <property type="match status" value="1"/>
</dbReference>
<dbReference type="PIRSF" id="PIRSF036506">
    <property type="entry name" value="Bifun_polymyxin_resist_ArnA"/>
    <property type="match status" value="1"/>
</dbReference>
<dbReference type="SUPFAM" id="SSF50486">
    <property type="entry name" value="FMT C-terminal domain-like"/>
    <property type="match status" value="1"/>
</dbReference>
<dbReference type="SUPFAM" id="SSF53328">
    <property type="entry name" value="Formyltransferase"/>
    <property type="match status" value="1"/>
</dbReference>
<dbReference type="SUPFAM" id="SSF51735">
    <property type="entry name" value="NAD(P)-binding Rossmann-fold domains"/>
    <property type="match status" value="1"/>
</dbReference>
<sequence length="663" mass="74186">MSSKAVVFAYHDIGCAGIEALLNTGYDIAAVFTHADDPKENNFYGSVAQLCARNGIPVHAPEDANHPLWIERIAKLNPDYLFSFYYRNLLSEPLLATARKGAFNLHGSLLPKYRGRAPANWVLVNGETETGVTLHRMVKRADAGAILAQQKVIIERSDTGLTLHAKLRDAASNLLRDALPQLAQGKLAETAQDESQATYFGRRTAADGKLEWKKPAEELFNLVRAVTQPYPGAFCAVGEHKLVVWQADVVKGNEGLAPGRVISVNPLRIACGEDSLVIKFGQRNDNGLYLAGPSLANELGLVDGSVLRGAESGRKPRRTRVLILGVNGFIGNHLSERLLRDDRYEVYGLDIGSDAIERLRSHPNFHYVEGDISIHTEWIEYHIKKCDVVLPLVAIATPIEYTRNPLRVFELDFEENLKLVRYCVKYNKRVIFPSTSEVYGMCQDQYFDEDTSNLVVGPVNKQRWIYSVSKQLLDRVIWAYGAKGLNFTLFRPFNWMGPRLDRLDSARIGSSRAITQLILNLVEGTPIRLFDGGEQKRCFTDIADGIEALARIIDNDNDACNGQIINIGNPENEASIRQLGEELLRQFEAHPLRGNFPPFAGFRDVESKAFYGTGYQDVAHRKPSIENAKRLLNWEPTVEMSETIGNTLDFFLREAMLEIADKK</sequence>
<reference key="1">
    <citation type="journal article" date="2009" name="Genome Biol.">
        <title>Genomic and genetic analyses of diversity and plant interactions of Pseudomonas fluorescens.</title>
        <authorList>
            <person name="Silby M.W."/>
            <person name="Cerdeno-Tarraga A.M."/>
            <person name="Vernikos G.S."/>
            <person name="Giddens S.R."/>
            <person name="Jackson R.W."/>
            <person name="Preston G.M."/>
            <person name="Zhang X.-X."/>
            <person name="Moon C.D."/>
            <person name="Gehrig S.M."/>
            <person name="Godfrey S.A.C."/>
            <person name="Knight C.G."/>
            <person name="Malone J.G."/>
            <person name="Robinson Z."/>
            <person name="Spiers A.J."/>
            <person name="Harris S."/>
            <person name="Challis G.L."/>
            <person name="Yaxley A.M."/>
            <person name="Harris D."/>
            <person name="Seeger K."/>
            <person name="Murphy L."/>
            <person name="Rutter S."/>
            <person name="Squares R."/>
            <person name="Quail M.A."/>
            <person name="Saunders E."/>
            <person name="Mavromatis K."/>
            <person name="Brettin T.S."/>
            <person name="Bentley S.D."/>
            <person name="Hothersall J."/>
            <person name="Stephens E."/>
            <person name="Thomas C.M."/>
            <person name="Parkhill J."/>
            <person name="Levy S.B."/>
            <person name="Rainey P.B."/>
            <person name="Thomson N.R."/>
        </authorList>
    </citation>
    <scope>NUCLEOTIDE SEQUENCE [LARGE SCALE GENOMIC DNA]</scope>
    <source>
        <strain>SBW25</strain>
    </source>
</reference>
<keyword id="KW-0046">Antibiotic resistance</keyword>
<keyword id="KW-0441">Lipid A biosynthesis</keyword>
<keyword id="KW-0444">Lipid biosynthesis</keyword>
<keyword id="KW-0443">Lipid metabolism</keyword>
<keyword id="KW-0448">Lipopolysaccharide biosynthesis</keyword>
<keyword id="KW-0511">Multifunctional enzyme</keyword>
<keyword id="KW-0520">NAD</keyword>
<keyword id="KW-0560">Oxidoreductase</keyword>
<keyword id="KW-0808">Transferase</keyword>
<organism>
    <name type="scientific">Pseudomonas fluorescens (strain SBW25)</name>
    <dbReference type="NCBI Taxonomy" id="216595"/>
    <lineage>
        <taxon>Bacteria</taxon>
        <taxon>Pseudomonadati</taxon>
        <taxon>Pseudomonadota</taxon>
        <taxon>Gammaproteobacteria</taxon>
        <taxon>Pseudomonadales</taxon>
        <taxon>Pseudomonadaceae</taxon>
        <taxon>Pseudomonas</taxon>
    </lineage>
</organism>
<protein>
    <recommendedName>
        <fullName evidence="1">Bifunctional polymyxin resistance protein ArnA</fullName>
    </recommendedName>
    <domain>
        <recommendedName>
            <fullName evidence="1">UDP-4-amino-4-deoxy-L-arabinose formyltransferase</fullName>
            <ecNumber evidence="1">2.1.2.13</ecNumber>
        </recommendedName>
        <alternativeName>
            <fullName evidence="1">ArnAFT</fullName>
        </alternativeName>
        <alternativeName>
            <fullName evidence="1">UDP-L-Ara4N formyltransferase</fullName>
        </alternativeName>
    </domain>
    <domain>
        <recommendedName>
            <fullName evidence="1">UDP-glucuronic acid oxidase, UDP-4-keto-hexauronic acid decarboxylating</fullName>
            <ecNumber evidence="1">1.1.1.305</ecNumber>
        </recommendedName>
        <alternativeName>
            <fullName evidence="1">ArnADH</fullName>
        </alternativeName>
        <alternativeName>
            <fullName evidence="1">UDP-GlcUA decarboxylase</fullName>
        </alternativeName>
        <alternativeName>
            <fullName evidence="1">UDP-glucuronic acid dehydrogenase</fullName>
        </alternativeName>
    </domain>
</protein>
<gene>
    <name evidence="1" type="primary">arnA</name>
    <name type="ordered locus">PFLU_3041</name>
</gene>
<evidence type="ECO:0000255" key="1">
    <source>
        <dbReference type="HAMAP-Rule" id="MF_01166"/>
    </source>
</evidence>
<proteinExistence type="inferred from homology"/>